<protein>
    <recommendedName>
        <fullName evidence="1">Protein-glutamate methylesterase/protein-glutamine glutaminase 2</fullName>
        <ecNumber evidence="1">3.1.1.61</ecNumber>
        <ecNumber evidence="1">3.5.1.44</ecNumber>
    </recommendedName>
</protein>
<accession>Q3KFZ6</accession>
<organism>
    <name type="scientific">Pseudomonas fluorescens (strain Pf0-1)</name>
    <dbReference type="NCBI Taxonomy" id="205922"/>
    <lineage>
        <taxon>Bacteria</taxon>
        <taxon>Pseudomonadati</taxon>
        <taxon>Pseudomonadota</taxon>
        <taxon>Gammaproteobacteria</taxon>
        <taxon>Pseudomonadales</taxon>
        <taxon>Pseudomonadaceae</taxon>
        <taxon>Pseudomonas</taxon>
    </lineage>
</organism>
<evidence type="ECO:0000255" key="1">
    <source>
        <dbReference type="HAMAP-Rule" id="MF_00099"/>
    </source>
</evidence>
<evidence type="ECO:0000256" key="2">
    <source>
        <dbReference type="SAM" id="MobiDB-lite"/>
    </source>
</evidence>
<sequence length="378" mass="39921">MAVKVLVVDDSGFFRRRVSEILSADPSIQVVGTATNGKEAIDQALALKPDVITMDYEMPMMDGITAVRHIMQRCPTPVLMFSSLTHEGARVTLDALDAGAVDFLPKNFEDISRNPEKVKQLLCEKVHSISRSNRRFSAYSAPAPAAAPTPAPIPAAAPSSFGSHSAPARPAPAPAPTRAPAASASSPAPKRKNYKLVAIGTSTGGPVALQRVLTQLPASFPAPIVLIQHMPAAFTKAFAERLDKLCRISVKEAEDGDILRPGLALLAPGGKQMMIDGRGAVKILPGDERLNYKPCVDITFGSAAKSYSDKVLAVVLTGMGADGREGARLLKQGGSTVWAQDEASCVIYGMPMAIVKADLADAVYSLDDIGKHIVEACV</sequence>
<dbReference type="EC" id="3.1.1.61" evidence="1"/>
<dbReference type="EC" id="3.5.1.44" evidence="1"/>
<dbReference type="EMBL" id="CP000094">
    <property type="protein sequence ID" value="ABA73310.1"/>
    <property type="molecule type" value="Genomic_DNA"/>
</dbReference>
<dbReference type="RefSeq" id="WP_011333073.1">
    <property type="nucleotide sequence ID" value="NC_007492.2"/>
</dbReference>
<dbReference type="SMR" id="Q3KFZ6"/>
<dbReference type="KEGG" id="pfo:Pfl01_1567"/>
<dbReference type="eggNOG" id="COG2201">
    <property type="taxonomic scope" value="Bacteria"/>
</dbReference>
<dbReference type="HOGENOM" id="CLU_000445_51_0_6"/>
<dbReference type="Proteomes" id="UP000002704">
    <property type="component" value="Chromosome"/>
</dbReference>
<dbReference type="GO" id="GO:0005737">
    <property type="term" value="C:cytoplasm"/>
    <property type="evidence" value="ECO:0007669"/>
    <property type="project" value="UniProtKB-SubCell"/>
</dbReference>
<dbReference type="GO" id="GO:0000156">
    <property type="term" value="F:phosphorelay response regulator activity"/>
    <property type="evidence" value="ECO:0007669"/>
    <property type="project" value="InterPro"/>
</dbReference>
<dbReference type="GO" id="GO:0008984">
    <property type="term" value="F:protein-glutamate methylesterase activity"/>
    <property type="evidence" value="ECO:0007669"/>
    <property type="project" value="UniProtKB-UniRule"/>
</dbReference>
<dbReference type="GO" id="GO:0050568">
    <property type="term" value="F:protein-glutamine glutaminase activity"/>
    <property type="evidence" value="ECO:0007669"/>
    <property type="project" value="UniProtKB-UniRule"/>
</dbReference>
<dbReference type="GO" id="GO:0006935">
    <property type="term" value="P:chemotaxis"/>
    <property type="evidence" value="ECO:0007669"/>
    <property type="project" value="UniProtKB-UniRule"/>
</dbReference>
<dbReference type="CDD" id="cd16432">
    <property type="entry name" value="CheB_Rec"/>
    <property type="match status" value="1"/>
</dbReference>
<dbReference type="CDD" id="cd17541">
    <property type="entry name" value="REC_CheB-like"/>
    <property type="match status" value="1"/>
</dbReference>
<dbReference type="FunFam" id="3.40.50.2300:FF:000077">
    <property type="entry name" value="Chemotaxis response regulator"/>
    <property type="match status" value="1"/>
</dbReference>
<dbReference type="FunFam" id="3.40.50.180:FF:000001">
    <property type="entry name" value="Protein-glutamate methylesterase/protein-glutamine glutaminase"/>
    <property type="match status" value="1"/>
</dbReference>
<dbReference type="Gene3D" id="3.40.50.2300">
    <property type="match status" value="1"/>
</dbReference>
<dbReference type="Gene3D" id="3.40.50.180">
    <property type="entry name" value="Methylesterase CheB, C-terminal domain"/>
    <property type="match status" value="1"/>
</dbReference>
<dbReference type="HAMAP" id="MF_00099">
    <property type="entry name" value="CheB_chemtxs"/>
    <property type="match status" value="1"/>
</dbReference>
<dbReference type="InterPro" id="IPR008248">
    <property type="entry name" value="CheB-like"/>
</dbReference>
<dbReference type="InterPro" id="IPR035909">
    <property type="entry name" value="CheB_C"/>
</dbReference>
<dbReference type="InterPro" id="IPR011006">
    <property type="entry name" value="CheY-like_superfamily"/>
</dbReference>
<dbReference type="InterPro" id="IPR000673">
    <property type="entry name" value="Sig_transdc_resp-reg_Me-estase"/>
</dbReference>
<dbReference type="InterPro" id="IPR001789">
    <property type="entry name" value="Sig_transdc_resp-reg_receiver"/>
</dbReference>
<dbReference type="NCBIfam" id="NF001965">
    <property type="entry name" value="PRK00742.1"/>
    <property type="match status" value="1"/>
</dbReference>
<dbReference type="PANTHER" id="PTHR42872">
    <property type="entry name" value="PROTEIN-GLUTAMATE METHYLESTERASE/PROTEIN-GLUTAMINE GLUTAMINASE"/>
    <property type="match status" value="1"/>
</dbReference>
<dbReference type="PANTHER" id="PTHR42872:SF3">
    <property type="entry name" value="PROTEIN-GLUTAMATE METHYLESTERASE_PROTEIN-GLUTAMINE GLUTAMINASE 1"/>
    <property type="match status" value="1"/>
</dbReference>
<dbReference type="Pfam" id="PF01339">
    <property type="entry name" value="CheB_methylest"/>
    <property type="match status" value="1"/>
</dbReference>
<dbReference type="Pfam" id="PF00072">
    <property type="entry name" value="Response_reg"/>
    <property type="match status" value="1"/>
</dbReference>
<dbReference type="PIRSF" id="PIRSF000876">
    <property type="entry name" value="RR_chemtxs_CheB"/>
    <property type="match status" value="1"/>
</dbReference>
<dbReference type="SMART" id="SM00448">
    <property type="entry name" value="REC"/>
    <property type="match status" value="1"/>
</dbReference>
<dbReference type="SUPFAM" id="SSF52172">
    <property type="entry name" value="CheY-like"/>
    <property type="match status" value="1"/>
</dbReference>
<dbReference type="SUPFAM" id="SSF52738">
    <property type="entry name" value="Methylesterase CheB, C-terminal domain"/>
    <property type="match status" value="1"/>
</dbReference>
<dbReference type="PROSITE" id="PS50122">
    <property type="entry name" value="CHEB"/>
    <property type="match status" value="1"/>
</dbReference>
<dbReference type="PROSITE" id="PS50110">
    <property type="entry name" value="RESPONSE_REGULATORY"/>
    <property type="match status" value="1"/>
</dbReference>
<feature type="chain" id="PRO_0000225472" description="Protein-glutamate methylesterase/protein-glutamine glutaminase 2">
    <location>
        <begin position="1"/>
        <end position="378"/>
    </location>
</feature>
<feature type="domain" description="Response regulatory" evidence="1">
    <location>
        <begin position="4"/>
        <end position="121"/>
    </location>
</feature>
<feature type="domain" description="CheB-type methylesterase" evidence="1">
    <location>
        <begin position="187"/>
        <end position="378"/>
    </location>
</feature>
<feature type="region of interest" description="Disordered" evidence="2">
    <location>
        <begin position="141"/>
        <end position="188"/>
    </location>
</feature>
<feature type="compositionally biased region" description="Pro residues" evidence="2">
    <location>
        <begin position="145"/>
        <end position="155"/>
    </location>
</feature>
<feature type="compositionally biased region" description="Low complexity" evidence="2">
    <location>
        <begin position="156"/>
        <end position="168"/>
    </location>
</feature>
<feature type="compositionally biased region" description="Low complexity" evidence="2">
    <location>
        <begin position="178"/>
        <end position="188"/>
    </location>
</feature>
<feature type="active site" evidence="1">
    <location>
        <position position="202"/>
    </location>
</feature>
<feature type="active site" evidence="1">
    <location>
        <position position="229"/>
    </location>
</feature>
<feature type="active site" evidence="1">
    <location>
        <position position="322"/>
    </location>
</feature>
<feature type="modified residue" description="4-aspartylphosphate" evidence="1">
    <location>
        <position position="55"/>
    </location>
</feature>
<gene>
    <name evidence="1" type="primary">cheB2</name>
    <name type="ordered locus">Pfl01_1567</name>
</gene>
<keyword id="KW-0145">Chemotaxis</keyword>
<keyword id="KW-0963">Cytoplasm</keyword>
<keyword id="KW-0378">Hydrolase</keyword>
<keyword id="KW-0597">Phosphoprotein</keyword>
<reference key="1">
    <citation type="journal article" date="2009" name="Genome Biol.">
        <title>Genomic and genetic analyses of diversity and plant interactions of Pseudomonas fluorescens.</title>
        <authorList>
            <person name="Silby M.W."/>
            <person name="Cerdeno-Tarraga A.M."/>
            <person name="Vernikos G.S."/>
            <person name="Giddens S.R."/>
            <person name="Jackson R.W."/>
            <person name="Preston G.M."/>
            <person name="Zhang X.-X."/>
            <person name="Moon C.D."/>
            <person name="Gehrig S.M."/>
            <person name="Godfrey S.A.C."/>
            <person name="Knight C.G."/>
            <person name="Malone J.G."/>
            <person name="Robinson Z."/>
            <person name="Spiers A.J."/>
            <person name="Harris S."/>
            <person name="Challis G.L."/>
            <person name="Yaxley A.M."/>
            <person name="Harris D."/>
            <person name="Seeger K."/>
            <person name="Murphy L."/>
            <person name="Rutter S."/>
            <person name="Squares R."/>
            <person name="Quail M.A."/>
            <person name="Saunders E."/>
            <person name="Mavromatis K."/>
            <person name="Brettin T.S."/>
            <person name="Bentley S.D."/>
            <person name="Hothersall J."/>
            <person name="Stephens E."/>
            <person name="Thomas C.M."/>
            <person name="Parkhill J."/>
            <person name="Levy S.B."/>
            <person name="Rainey P.B."/>
            <person name="Thomson N.R."/>
        </authorList>
    </citation>
    <scope>NUCLEOTIDE SEQUENCE [LARGE SCALE GENOMIC DNA]</scope>
    <source>
        <strain>Pf0-1</strain>
    </source>
</reference>
<name>CHEB2_PSEPF</name>
<proteinExistence type="inferred from homology"/>
<comment type="function">
    <text evidence="1">Involved in chemotaxis. Part of a chemotaxis signal transduction system that modulates chemotaxis in response to various stimuli. Catalyzes the demethylation of specific methylglutamate residues introduced into the chemoreceptors (methyl-accepting chemotaxis proteins or MCP) by CheR. Also mediates the irreversible deamidation of specific glutamine residues to glutamic acid.</text>
</comment>
<comment type="catalytic activity">
    <reaction evidence="1">
        <text>[protein]-L-glutamate 5-O-methyl ester + H2O = L-glutamyl-[protein] + methanol + H(+)</text>
        <dbReference type="Rhea" id="RHEA:23236"/>
        <dbReference type="Rhea" id="RHEA-COMP:10208"/>
        <dbReference type="Rhea" id="RHEA-COMP:10311"/>
        <dbReference type="ChEBI" id="CHEBI:15377"/>
        <dbReference type="ChEBI" id="CHEBI:15378"/>
        <dbReference type="ChEBI" id="CHEBI:17790"/>
        <dbReference type="ChEBI" id="CHEBI:29973"/>
        <dbReference type="ChEBI" id="CHEBI:82795"/>
        <dbReference type="EC" id="3.1.1.61"/>
    </reaction>
</comment>
<comment type="catalytic activity">
    <reaction evidence="1">
        <text>L-glutaminyl-[protein] + H2O = L-glutamyl-[protein] + NH4(+)</text>
        <dbReference type="Rhea" id="RHEA:16441"/>
        <dbReference type="Rhea" id="RHEA-COMP:10207"/>
        <dbReference type="Rhea" id="RHEA-COMP:10208"/>
        <dbReference type="ChEBI" id="CHEBI:15377"/>
        <dbReference type="ChEBI" id="CHEBI:28938"/>
        <dbReference type="ChEBI" id="CHEBI:29973"/>
        <dbReference type="ChEBI" id="CHEBI:30011"/>
        <dbReference type="EC" id="3.5.1.44"/>
    </reaction>
</comment>
<comment type="subcellular location">
    <subcellularLocation>
        <location evidence="1">Cytoplasm</location>
    </subcellularLocation>
</comment>
<comment type="domain">
    <text evidence="1">Contains a C-terminal catalytic domain, and an N-terminal region which modulates catalytic activity.</text>
</comment>
<comment type="PTM">
    <text evidence="1">Phosphorylated by CheA. Phosphorylation of the N-terminal regulatory domain activates the methylesterase activity.</text>
</comment>
<comment type="similarity">
    <text evidence="1">Belongs to the CheB family.</text>
</comment>